<gene>
    <name evidence="1" type="primary">astB</name>
    <name type="ordered locus">PSHAb0177</name>
</gene>
<evidence type="ECO:0000255" key="1">
    <source>
        <dbReference type="HAMAP-Rule" id="MF_01172"/>
    </source>
</evidence>
<proteinExistence type="inferred from homology"/>
<comment type="function">
    <text evidence="1">Catalyzes the hydrolysis of N(2)-succinylarginine into N(2)-succinylornithine, ammonia and CO(2).</text>
</comment>
<comment type="catalytic activity">
    <reaction evidence="1">
        <text>N(2)-succinyl-L-arginine + 2 H2O + 2 H(+) = N(2)-succinyl-L-ornithine + 2 NH4(+) + CO2</text>
        <dbReference type="Rhea" id="RHEA:19533"/>
        <dbReference type="ChEBI" id="CHEBI:15377"/>
        <dbReference type="ChEBI" id="CHEBI:15378"/>
        <dbReference type="ChEBI" id="CHEBI:16526"/>
        <dbReference type="ChEBI" id="CHEBI:28938"/>
        <dbReference type="ChEBI" id="CHEBI:58241"/>
        <dbReference type="ChEBI" id="CHEBI:58514"/>
        <dbReference type="EC" id="3.5.3.23"/>
    </reaction>
</comment>
<comment type="pathway">
    <text evidence="1">Amino-acid degradation; L-arginine degradation via AST pathway; L-glutamate and succinate from L-arginine: step 2/5.</text>
</comment>
<comment type="subunit">
    <text evidence="1">Homodimer.</text>
</comment>
<comment type="similarity">
    <text evidence="1">Belongs to the succinylarginine dihydrolase family.</text>
</comment>
<dbReference type="EC" id="3.5.3.23" evidence="1"/>
<dbReference type="EMBL" id="CR954247">
    <property type="protein sequence ID" value="CAI89223.1"/>
    <property type="molecule type" value="Genomic_DNA"/>
</dbReference>
<dbReference type="SMR" id="Q3ID31"/>
<dbReference type="STRING" id="326442.PSHAb0177"/>
<dbReference type="KEGG" id="pha:PSHAb0177"/>
<dbReference type="PATRIC" id="fig|326442.8.peg.3090"/>
<dbReference type="eggNOG" id="COG3724">
    <property type="taxonomic scope" value="Bacteria"/>
</dbReference>
<dbReference type="HOGENOM" id="CLU_053835_0_0_6"/>
<dbReference type="BioCyc" id="PHAL326442:PSHA_RS15720-MONOMER"/>
<dbReference type="UniPathway" id="UPA00185">
    <property type="reaction ID" value="UER00280"/>
</dbReference>
<dbReference type="Proteomes" id="UP000006843">
    <property type="component" value="Chromosome II"/>
</dbReference>
<dbReference type="GO" id="GO:0009015">
    <property type="term" value="F:N-succinylarginine dihydrolase activity"/>
    <property type="evidence" value="ECO:0007669"/>
    <property type="project" value="UniProtKB-UniRule"/>
</dbReference>
<dbReference type="GO" id="GO:0019544">
    <property type="term" value="P:arginine catabolic process to glutamate"/>
    <property type="evidence" value="ECO:0007669"/>
    <property type="project" value="UniProtKB-UniRule"/>
</dbReference>
<dbReference type="GO" id="GO:0019545">
    <property type="term" value="P:arginine catabolic process to succinate"/>
    <property type="evidence" value="ECO:0007669"/>
    <property type="project" value="UniProtKB-UniRule"/>
</dbReference>
<dbReference type="Gene3D" id="3.75.10.20">
    <property type="entry name" value="Succinylarginine dihydrolase"/>
    <property type="match status" value="1"/>
</dbReference>
<dbReference type="HAMAP" id="MF_01172">
    <property type="entry name" value="AstB"/>
    <property type="match status" value="1"/>
</dbReference>
<dbReference type="InterPro" id="IPR037031">
    <property type="entry name" value="AstB_sf"/>
</dbReference>
<dbReference type="InterPro" id="IPR007079">
    <property type="entry name" value="SuccinylArg_d-Hdrlase_AstB"/>
</dbReference>
<dbReference type="NCBIfam" id="TIGR03241">
    <property type="entry name" value="arg_catab_astB"/>
    <property type="match status" value="1"/>
</dbReference>
<dbReference type="NCBIfam" id="NF009789">
    <property type="entry name" value="PRK13281.1"/>
    <property type="match status" value="1"/>
</dbReference>
<dbReference type="PANTHER" id="PTHR30420">
    <property type="entry name" value="N-SUCCINYLARGININE DIHYDROLASE"/>
    <property type="match status" value="1"/>
</dbReference>
<dbReference type="PANTHER" id="PTHR30420:SF2">
    <property type="entry name" value="N-SUCCINYLARGININE DIHYDROLASE"/>
    <property type="match status" value="1"/>
</dbReference>
<dbReference type="Pfam" id="PF04996">
    <property type="entry name" value="AstB"/>
    <property type="match status" value="1"/>
</dbReference>
<dbReference type="SUPFAM" id="SSF55909">
    <property type="entry name" value="Pentein"/>
    <property type="match status" value="1"/>
</dbReference>
<feature type="chain" id="PRO_0000262364" description="N-succinylarginine dihydrolase">
    <location>
        <begin position="1"/>
        <end position="448"/>
    </location>
</feature>
<feature type="active site" evidence="1">
    <location>
        <position position="174"/>
    </location>
</feature>
<feature type="active site" evidence="1">
    <location>
        <position position="250"/>
    </location>
</feature>
<feature type="active site" description="Nucleophile" evidence="1">
    <location>
        <position position="370"/>
    </location>
</feature>
<feature type="binding site" evidence="1">
    <location>
        <begin position="19"/>
        <end position="28"/>
    </location>
    <ligand>
        <name>substrate</name>
    </ligand>
</feature>
<feature type="binding site" evidence="1">
    <location>
        <position position="110"/>
    </location>
    <ligand>
        <name>substrate</name>
    </ligand>
</feature>
<feature type="binding site" evidence="1">
    <location>
        <begin position="137"/>
        <end position="138"/>
    </location>
    <ligand>
        <name>substrate</name>
    </ligand>
</feature>
<feature type="binding site" evidence="1">
    <location>
        <position position="214"/>
    </location>
    <ligand>
        <name>substrate</name>
    </ligand>
</feature>
<feature type="binding site" evidence="1">
    <location>
        <position position="252"/>
    </location>
    <ligand>
        <name>substrate</name>
    </ligand>
</feature>
<feature type="binding site" evidence="1">
    <location>
        <position position="364"/>
    </location>
    <ligand>
        <name>substrate</name>
    </ligand>
</feature>
<protein>
    <recommendedName>
        <fullName evidence="1">N-succinylarginine dihydrolase</fullName>
        <ecNumber evidence="1">3.5.3.23</ecNumber>
    </recommendedName>
</protein>
<organism>
    <name type="scientific">Pseudoalteromonas translucida (strain TAC 125)</name>
    <dbReference type="NCBI Taxonomy" id="326442"/>
    <lineage>
        <taxon>Bacteria</taxon>
        <taxon>Pseudomonadati</taxon>
        <taxon>Pseudomonadota</taxon>
        <taxon>Gammaproteobacteria</taxon>
        <taxon>Alteromonadales</taxon>
        <taxon>Pseudoalteromonadaceae</taxon>
        <taxon>Pseudoalteromonas</taxon>
    </lineage>
</organism>
<accession>Q3ID31</accession>
<name>ASTB_PSET1</name>
<reference key="1">
    <citation type="journal article" date="2005" name="Genome Res.">
        <title>Coping with cold: the genome of the versatile marine Antarctica bacterium Pseudoalteromonas haloplanktis TAC125.</title>
        <authorList>
            <person name="Medigue C."/>
            <person name="Krin E."/>
            <person name="Pascal G."/>
            <person name="Barbe V."/>
            <person name="Bernsel A."/>
            <person name="Bertin P.N."/>
            <person name="Cheung F."/>
            <person name="Cruveiller S."/>
            <person name="D'Amico S."/>
            <person name="Duilio A."/>
            <person name="Fang G."/>
            <person name="Feller G."/>
            <person name="Ho C."/>
            <person name="Mangenot S."/>
            <person name="Marino G."/>
            <person name="Nilsson J."/>
            <person name="Parrilli E."/>
            <person name="Rocha E.P.C."/>
            <person name="Rouy Z."/>
            <person name="Sekowska A."/>
            <person name="Tutino M.L."/>
            <person name="Vallenet D."/>
            <person name="von Heijne G."/>
            <person name="Danchin A."/>
        </authorList>
    </citation>
    <scope>NUCLEOTIDE SEQUENCE [LARGE SCALE GENOMIC DNA]</scope>
    <source>
        <strain>TAC 125</strain>
    </source>
</reference>
<sequence>MPALEVNFDGLVGPTHNYAGLSYGNVASLNNAASFSNPQEAVLQGLEKMKAMHDKGLTQGVFAPHARPDLNILRRLGFSGNDAQIINKAFNADPILLRACYSASAMWTANAATVSPSPDTTDGKVHFTAANLNNKFHRSLEPATTTRLLKAMFNNQNHFAHHTHLPDQGFFGDEGAANHTRFCDSHGEQGLEMFVFGASAFNSHLPKPVKFPARQTLEASEAICRLHNLKDTSQILLQQNPDVIDQGVFHNDVIAVGNANVLLCHQQAFLNQQQALQDIREAYVGNKQFYIIEVPTSKVTIQDAVSSYLFNSQLVSLSDGSMLLVAPKECQRNSAVNDYIEEMIMADNPINQVRFFDLRQSMQNGGGPACLRLRVALNEQELAAVNPDVILTDTKYTQLCNWAQRNYRDQLGAKDFADPALLSESYQALDELTQLLNLGSVYDFQLEG</sequence>
<keyword id="KW-0056">Arginine metabolism</keyword>
<keyword id="KW-0378">Hydrolase</keyword>
<keyword id="KW-1185">Reference proteome</keyword>